<accession>Q2G8X5</accession>
<keyword id="KW-1185">Reference proteome</keyword>
<keyword id="KW-0687">Ribonucleoprotein</keyword>
<keyword id="KW-0689">Ribosomal protein</keyword>
<keyword id="KW-0694">RNA-binding</keyword>
<keyword id="KW-0699">rRNA-binding</keyword>
<dbReference type="EMBL" id="CP000248">
    <property type="protein sequence ID" value="ABD25698.1"/>
    <property type="molecule type" value="Genomic_DNA"/>
</dbReference>
<dbReference type="RefSeq" id="WP_011444912.1">
    <property type="nucleotide sequence ID" value="NC_007794.1"/>
</dbReference>
<dbReference type="SMR" id="Q2G8X5"/>
<dbReference type="STRING" id="279238.Saro_1254"/>
<dbReference type="KEGG" id="nar:Saro_1254"/>
<dbReference type="eggNOG" id="COG0091">
    <property type="taxonomic scope" value="Bacteria"/>
</dbReference>
<dbReference type="HOGENOM" id="CLU_083987_3_0_5"/>
<dbReference type="Proteomes" id="UP000009134">
    <property type="component" value="Chromosome"/>
</dbReference>
<dbReference type="GO" id="GO:0022625">
    <property type="term" value="C:cytosolic large ribosomal subunit"/>
    <property type="evidence" value="ECO:0007669"/>
    <property type="project" value="TreeGrafter"/>
</dbReference>
<dbReference type="GO" id="GO:0019843">
    <property type="term" value="F:rRNA binding"/>
    <property type="evidence" value="ECO:0007669"/>
    <property type="project" value="UniProtKB-UniRule"/>
</dbReference>
<dbReference type="GO" id="GO:0003735">
    <property type="term" value="F:structural constituent of ribosome"/>
    <property type="evidence" value="ECO:0007669"/>
    <property type="project" value="InterPro"/>
</dbReference>
<dbReference type="GO" id="GO:0006412">
    <property type="term" value="P:translation"/>
    <property type="evidence" value="ECO:0007669"/>
    <property type="project" value="UniProtKB-UniRule"/>
</dbReference>
<dbReference type="CDD" id="cd00336">
    <property type="entry name" value="Ribosomal_L22"/>
    <property type="match status" value="1"/>
</dbReference>
<dbReference type="Gene3D" id="3.90.470.10">
    <property type="entry name" value="Ribosomal protein L22/L17"/>
    <property type="match status" value="1"/>
</dbReference>
<dbReference type="HAMAP" id="MF_01331_B">
    <property type="entry name" value="Ribosomal_uL22_B"/>
    <property type="match status" value="1"/>
</dbReference>
<dbReference type="InterPro" id="IPR001063">
    <property type="entry name" value="Ribosomal_uL22"/>
</dbReference>
<dbReference type="InterPro" id="IPR005727">
    <property type="entry name" value="Ribosomal_uL22_bac/chlpt-type"/>
</dbReference>
<dbReference type="InterPro" id="IPR047867">
    <property type="entry name" value="Ribosomal_uL22_bac/org-type"/>
</dbReference>
<dbReference type="InterPro" id="IPR036394">
    <property type="entry name" value="Ribosomal_uL22_sf"/>
</dbReference>
<dbReference type="NCBIfam" id="TIGR01044">
    <property type="entry name" value="rplV_bact"/>
    <property type="match status" value="1"/>
</dbReference>
<dbReference type="PANTHER" id="PTHR13501">
    <property type="entry name" value="CHLOROPLAST 50S RIBOSOMAL PROTEIN L22-RELATED"/>
    <property type="match status" value="1"/>
</dbReference>
<dbReference type="PANTHER" id="PTHR13501:SF8">
    <property type="entry name" value="LARGE RIBOSOMAL SUBUNIT PROTEIN UL22M"/>
    <property type="match status" value="1"/>
</dbReference>
<dbReference type="Pfam" id="PF00237">
    <property type="entry name" value="Ribosomal_L22"/>
    <property type="match status" value="1"/>
</dbReference>
<dbReference type="SUPFAM" id="SSF54843">
    <property type="entry name" value="Ribosomal protein L22"/>
    <property type="match status" value="1"/>
</dbReference>
<sequence length="125" mass="13576">MSKPKAPRRVGDKEALSVGTQIRGSAQKLNLVAGLIRGKRAEDAMNILAFSKKAMAVDARKVLASAIANAENNHNLDVDALVVAEASVGKSITMKRFHTRGRGKSTRILKPFSRLRIVVREVEEA</sequence>
<comment type="function">
    <text evidence="1">This protein binds specifically to 23S rRNA; its binding is stimulated by other ribosomal proteins, e.g. L4, L17, and L20. It is important during the early stages of 50S assembly. It makes multiple contacts with different domains of the 23S rRNA in the assembled 50S subunit and ribosome (By similarity).</text>
</comment>
<comment type="function">
    <text evidence="1">The globular domain of the protein is located near the polypeptide exit tunnel on the outside of the subunit, while an extended beta-hairpin is found that lines the wall of the exit tunnel in the center of the 70S ribosome.</text>
</comment>
<comment type="subunit">
    <text evidence="1">Part of the 50S ribosomal subunit.</text>
</comment>
<comment type="similarity">
    <text evidence="1">Belongs to the universal ribosomal protein uL22 family.</text>
</comment>
<protein>
    <recommendedName>
        <fullName evidence="1">Large ribosomal subunit protein uL22</fullName>
    </recommendedName>
    <alternativeName>
        <fullName evidence="2">50S ribosomal protein L22</fullName>
    </alternativeName>
</protein>
<proteinExistence type="inferred from homology"/>
<name>RL22_NOVAD</name>
<organism>
    <name type="scientific">Novosphingobium aromaticivorans (strain ATCC 700278 / DSM 12444 / CCUG 56034 / CIP 105152 / NBRC 16084 / F199)</name>
    <dbReference type="NCBI Taxonomy" id="279238"/>
    <lineage>
        <taxon>Bacteria</taxon>
        <taxon>Pseudomonadati</taxon>
        <taxon>Pseudomonadota</taxon>
        <taxon>Alphaproteobacteria</taxon>
        <taxon>Sphingomonadales</taxon>
        <taxon>Sphingomonadaceae</taxon>
        <taxon>Novosphingobium</taxon>
    </lineage>
</organism>
<gene>
    <name evidence="1" type="primary">rplV</name>
    <name type="ordered locus">Saro_1254</name>
</gene>
<reference key="1">
    <citation type="submission" date="2006-01" db="EMBL/GenBank/DDBJ databases">
        <title>Complete sequence of Novosphingobium aromaticivorans DSM 12444.</title>
        <authorList>
            <consortium name="US DOE Joint Genome Institute"/>
            <person name="Copeland A."/>
            <person name="Lucas S."/>
            <person name="Lapidus A."/>
            <person name="Barry K."/>
            <person name="Detter J.C."/>
            <person name="Glavina T."/>
            <person name="Hammon N."/>
            <person name="Israni S."/>
            <person name="Pitluck S."/>
            <person name="Chain P."/>
            <person name="Malfatti S."/>
            <person name="Shin M."/>
            <person name="Vergez L."/>
            <person name="Schmutz J."/>
            <person name="Larimer F."/>
            <person name="Land M."/>
            <person name="Kyrpides N."/>
            <person name="Ivanova N."/>
            <person name="Fredrickson J."/>
            <person name="Balkwill D."/>
            <person name="Romine M.F."/>
            <person name="Richardson P."/>
        </authorList>
    </citation>
    <scope>NUCLEOTIDE SEQUENCE [LARGE SCALE GENOMIC DNA]</scope>
    <source>
        <strain>ATCC 700278 / DSM 12444 / CCUG 56034 / CIP 105152 / NBRC 16084 / F199</strain>
    </source>
</reference>
<feature type="chain" id="PRO_0000354499" description="Large ribosomal subunit protein uL22">
    <location>
        <begin position="1"/>
        <end position="125"/>
    </location>
</feature>
<evidence type="ECO:0000255" key="1">
    <source>
        <dbReference type="HAMAP-Rule" id="MF_01331"/>
    </source>
</evidence>
<evidence type="ECO:0000305" key="2"/>